<evidence type="ECO:0000255" key="1"/>
<evidence type="ECO:0000256" key="2">
    <source>
        <dbReference type="SAM" id="MobiDB-lite"/>
    </source>
</evidence>
<evidence type="ECO:0000269" key="3">
    <source>
    </source>
</evidence>
<evidence type="ECO:0000269" key="4">
    <source>
    </source>
</evidence>
<evidence type="ECO:0000305" key="5"/>
<evidence type="ECO:0007744" key="6">
    <source>
    </source>
</evidence>
<sequence>MKSLNDLPAPKSTTTTYYDHSNDAWFKNRVTESETVKSSSIKFKVVPAYLNRQGLRPKNPEDFGDGGAFPEIHLPQYPLLMGKNKSNKPGAKTLPVTVDAQGNVVFDAIVRQNENSRKIVYSQHKDIIPKFLKNEGDLGTVVDEEEELQKEIQETAEETKAAIEKIVNVRLSAAQPSNIARQSGDSQYIKYKPSQQSSAFNSGAKERIIRMVEMPVDPLDPPKFKHKRVPRASGSPPVPVMHSPPRPVTVKDQQDWKIPPCISNWKNPKGYTIPLDKRLAADGRGLQDVQINDNFAKLSEALYVAEQKAREAVSMRSKVQKEMVMKDKERKEQELRALAQKARSERTGAAMSMPVSSDRGRSESVDPRGDYDNYDQDRGREREREEPQETREEREKRIQREKIREERRRERERERRLDAKDAAMGKKSKITRDRDRDISEKVALGMASTGGKGGGEVMYDQRLFNQDKGMDSGFAADDQYNLYDKGLFTAQPTLSTLYKPKKDNDEEMYGNADEQLDKIKNTERFKPDKAFTGASERVGSKRDRPVEFEKEEEQDPFGLEKWVSDLKKGKKPLDKIGSGGTMRASGGGGSSSRDDDHGGSGRTKINFERSDRR</sequence>
<reference key="1">
    <citation type="journal article" date="2000" name="Nature">
        <title>Sequence and analysis of chromosome 1 of the plant Arabidopsis thaliana.</title>
        <authorList>
            <person name="Theologis A."/>
            <person name="Ecker J.R."/>
            <person name="Palm C.J."/>
            <person name="Federspiel N.A."/>
            <person name="Kaul S."/>
            <person name="White O."/>
            <person name="Alonso J."/>
            <person name="Altafi H."/>
            <person name="Araujo R."/>
            <person name="Bowman C.L."/>
            <person name="Brooks S.Y."/>
            <person name="Buehler E."/>
            <person name="Chan A."/>
            <person name="Chao Q."/>
            <person name="Chen H."/>
            <person name="Cheuk R.F."/>
            <person name="Chin C.W."/>
            <person name="Chung M.K."/>
            <person name="Conn L."/>
            <person name="Conway A.B."/>
            <person name="Conway A.R."/>
            <person name="Creasy T.H."/>
            <person name="Dewar K."/>
            <person name="Dunn P."/>
            <person name="Etgu P."/>
            <person name="Feldblyum T.V."/>
            <person name="Feng J.-D."/>
            <person name="Fong B."/>
            <person name="Fujii C.Y."/>
            <person name="Gill J.E."/>
            <person name="Goldsmith A.D."/>
            <person name="Haas B."/>
            <person name="Hansen N.F."/>
            <person name="Hughes B."/>
            <person name="Huizar L."/>
            <person name="Hunter J.L."/>
            <person name="Jenkins J."/>
            <person name="Johnson-Hopson C."/>
            <person name="Khan S."/>
            <person name="Khaykin E."/>
            <person name="Kim C.J."/>
            <person name="Koo H.L."/>
            <person name="Kremenetskaia I."/>
            <person name="Kurtz D.B."/>
            <person name="Kwan A."/>
            <person name="Lam B."/>
            <person name="Langin-Hooper S."/>
            <person name="Lee A."/>
            <person name="Lee J.M."/>
            <person name="Lenz C.A."/>
            <person name="Li J.H."/>
            <person name="Li Y.-P."/>
            <person name="Lin X."/>
            <person name="Liu S.X."/>
            <person name="Liu Z.A."/>
            <person name="Luros J.S."/>
            <person name="Maiti R."/>
            <person name="Marziali A."/>
            <person name="Militscher J."/>
            <person name="Miranda M."/>
            <person name="Nguyen M."/>
            <person name="Nierman W.C."/>
            <person name="Osborne B.I."/>
            <person name="Pai G."/>
            <person name="Peterson J."/>
            <person name="Pham P.K."/>
            <person name="Rizzo M."/>
            <person name="Rooney T."/>
            <person name="Rowley D."/>
            <person name="Sakano H."/>
            <person name="Salzberg S.L."/>
            <person name="Schwartz J.R."/>
            <person name="Shinn P."/>
            <person name="Southwick A.M."/>
            <person name="Sun H."/>
            <person name="Tallon L.J."/>
            <person name="Tambunga G."/>
            <person name="Toriumi M.J."/>
            <person name="Town C.D."/>
            <person name="Utterback T."/>
            <person name="Van Aken S."/>
            <person name="Vaysberg M."/>
            <person name="Vysotskaia V.S."/>
            <person name="Walker M."/>
            <person name="Wu D."/>
            <person name="Yu G."/>
            <person name="Fraser C.M."/>
            <person name="Venter J.C."/>
            <person name="Davis R.W."/>
        </authorList>
    </citation>
    <scope>NUCLEOTIDE SEQUENCE [LARGE SCALE GENOMIC DNA]</scope>
    <source>
        <strain>cv. Columbia</strain>
    </source>
</reference>
<reference key="2">
    <citation type="journal article" date="2017" name="Plant J.">
        <title>Araport11: a complete reannotation of the Arabidopsis thaliana reference genome.</title>
        <authorList>
            <person name="Cheng C.Y."/>
            <person name="Krishnakumar V."/>
            <person name="Chan A.P."/>
            <person name="Thibaud-Nissen F."/>
            <person name="Schobel S."/>
            <person name="Town C.D."/>
        </authorList>
    </citation>
    <scope>GENOME REANNOTATION</scope>
    <source>
        <strain>cv. Columbia</strain>
    </source>
</reference>
<reference key="3">
    <citation type="journal article" date="2003" name="Science">
        <title>Empirical analysis of transcriptional activity in the Arabidopsis genome.</title>
        <authorList>
            <person name="Yamada K."/>
            <person name="Lim J."/>
            <person name="Dale J.M."/>
            <person name="Chen H."/>
            <person name="Shinn P."/>
            <person name="Palm C.J."/>
            <person name="Southwick A.M."/>
            <person name="Wu H.C."/>
            <person name="Kim C.J."/>
            <person name="Nguyen M."/>
            <person name="Pham P.K."/>
            <person name="Cheuk R.F."/>
            <person name="Karlin-Newmann G."/>
            <person name="Liu S.X."/>
            <person name="Lam B."/>
            <person name="Sakano H."/>
            <person name="Wu T."/>
            <person name="Yu G."/>
            <person name="Miranda M."/>
            <person name="Quach H.L."/>
            <person name="Tripp M."/>
            <person name="Chang C.H."/>
            <person name="Lee J.M."/>
            <person name="Toriumi M.J."/>
            <person name="Chan M.M."/>
            <person name="Tang C.C."/>
            <person name="Onodera C.S."/>
            <person name="Deng J.M."/>
            <person name="Akiyama K."/>
            <person name="Ansari Y."/>
            <person name="Arakawa T."/>
            <person name="Banh J."/>
            <person name="Banno F."/>
            <person name="Bowser L."/>
            <person name="Brooks S.Y."/>
            <person name="Carninci P."/>
            <person name="Chao Q."/>
            <person name="Choy N."/>
            <person name="Enju A."/>
            <person name="Goldsmith A.D."/>
            <person name="Gurjal M."/>
            <person name="Hansen N.F."/>
            <person name="Hayashizaki Y."/>
            <person name="Johnson-Hopson C."/>
            <person name="Hsuan V.W."/>
            <person name="Iida K."/>
            <person name="Karnes M."/>
            <person name="Khan S."/>
            <person name="Koesema E."/>
            <person name="Ishida J."/>
            <person name="Jiang P.X."/>
            <person name="Jones T."/>
            <person name="Kawai J."/>
            <person name="Kamiya A."/>
            <person name="Meyers C."/>
            <person name="Nakajima M."/>
            <person name="Narusaka M."/>
            <person name="Seki M."/>
            <person name="Sakurai T."/>
            <person name="Satou M."/>
            <person name="Tamse R."/>
            <person name="Vaysberg M."/>
            <person name="Wallender E.K."/>
            <person name="Wong C."/>
            <person name="Yamamura Y."/>
            <person name="Yuan S."/>
            <person name="Shinozaki K."/>
            <person name="Davis R.W."/>
            <person name="Theologis A."/>
            <person name="Ecker J.R."/>
        </authorList>
    </citation>
    <scope>NUCLEOTIDE SEQUENCE [LARGE SCALE MRNA]</scope>
    <source>
        <strain>cv. Columbia</strain>
    </source>
</reference>
<reference key="4">
    <citation type="submission" date="2005-03" db="EMBL/GenBank/DDBJ databases">
        <title>Large-scale analysis of RIKEN Arabidopsis full-length (RAFL) cDNAs.</title>
        <authorList>
            <person name="Totoki Y."/>
            <person name="Seki M."/>
            <person name="Ishida J."/>
            <person name="Nakajima M."/>
            <person name="Enju A."/>
            <person name="Kamiya A."/>
            <person name="Narusaka M."/>
            <person name="Shin-i T."/>
            <person name="Nakagawa M."/>
            <person name="Sakamoto N."/>
            <person name="Oishi K."/>
            <person name="Kohara Y."/>
            <person name="Kobayashi M."/>
            <person name="Toyoda A."/>
            <person name="Sakaki Y."/>
            <person name="Sakurai T."/>
            <person name="Iida K."/>
            <person name="Akiyama K."/>
            <person name="Satou M."/>
            <person name="Toyoda T."/>
            <person name="Konagaya A."/>
            <person name="Carninci P."/>
            <person name="Kawai J."/>
            <person name="Hayashizaki Y."/>
            <person name="Shinozaki K."/>
        </authorList>
    </citation>
    <scope>NUCLEOTIDE SEQUENCE [LARGE SCALE MRNA]</scope>
    <source>
        <strain>cv. Columbia</strain>
    </source>
</reference>
<reference key="5">
    <citation type="journal article" date="2008" name="J. Proteome Res.">
        <title>Site-specific phosphorylation profiling of Arabidopsis proteins by mass spectrometry and peptide chip analysis.</title>
        <authorList>
            <person name="de la Fuente van Bentem S."/>
            <person name="Anrather D."/>
            <person name="Dohnal I."/>
            <person name="Roitinger E."/>
            <person name="Csaszar E."/>
            <person name="Joore J."/>
            <person name="Buijnink J."/>
            <person name="Carreri A."/>
            <person name="Forzani C."/>
            <person name="Lorkovic Z.J."/>
            <person name="Barta A."/>
            <person name="Lecourieux D."/>
            <person name="Verhounig A."/>
            <person name="Jonak C."/>
            <person name="Hirt H."/>
        </authorList>
    </citation>
    <scope>PHOSPHORYLATION [LARGE SCALE ANALYSIS] AT SER-235 AND SER-243</scope>
    <scope>IDENTIFICATION BY MASS SPECTROMETRY [LARGE SCALE ANALYSIS]</scope>
    <source>
        <tissue>Root</tissue>
    </source>
</reference>
<reference key="6">
    <citation type="journal article" date="2010" name="New Phytol.">
        <title>A putative novel transcription factor, AtSKIP, is involved in abscisic acid signalling and confers salt and osmotic tolerance in Arabidopsis.</title>
        <authorList>
            <person name="Lim G.H."/>
            <person name="Zhang X."/>
            <person name="Chung M.S."/>
            <person name="Lee D.J."/>
            <person name="Woo Y.M."/>
            <person name="Cheong H.S."/>
            <person name="Kim C.S."/>
        </authorList>
    </citation>
    <scope>FUNCTION</scope>
    <scope>SUBCELLULAR LOCATION</scope>
    <scope>INDUCTION BY ABIOTIC STRESS AND ABSCISIC ACID</scope>
    <scope>TISSUE SPECIFICITY</scope>
    <scope>DEVELOPMENTAL STAGE</scope>
</reference>
<reference key="7">
    <citation type="journal article" date="2012" name="Plant Cell">
        <title>SKIP is a component of the spliceosome linking alternative splicing and the circadian clock in Arabidopsis.</title>
        <authorList>
            <person name="Wang X."/>
            <person name="Wu F."/>
            <person name="Xie Q."/>
            <person name="Wang H."/>
            <person name="Wang Y."/>
            <person name="Yue Y."/>
            <person name="Gahura O."/>
            <person name="Ma S."/>
            <person name="Liu L."/>
            <person name="Cao Y."/>
            <person name="Jiao Y."/>
            <person name="Puta F."/>
            <person name="McClung C.R."/>
            <person name="Xu X."/>
            <person name="Ma L."/>
        </authorList>
    </citation>
    <scope>FUNCTION</scope>
    <scope>DISRUPTION PHENOTYPE</scope>
    <scope>SUBCELLULAR LOCATION</scope>
    <scope>TISSUE SPECIFICITY</scope>
    <scope>INDUCTION</scope>
    <scope>INTERACTION WITH SR45</scope>
</reference>
<keyword id="KW-0025">Alternative splicing</keyword>
<keyword id="KW-0090">Biological rhythms</keyword>
<keyword id="KW-0175">Coiled coil</keyword>
<keyword id="KW-0507">mRNA processing</keyword>
<keyword id="KW-0508">mRNA splicing</keyword>
<keyword id="KW-0539">Nucleus</keyword>
<keyword id="KW-0597">Phosphoprotein</keyword>
<keyword id="KW-1185">Reference proteome</keyword>
<keyword id="KW-0747">Spliceosome</keyword>
<keyword id="KW-0804">Transcription</keyword>
<keyword id="KW-0805">Transcription regulation</keyword>
<protein>
    <recommendedName>
        <fullName>SNW/SKI-interacting protein</fullName>
        <shortName>AtSKIP</shortName>
    </recommendedName>
    <alternativeName>
        <fullName>Protein EARLY FLOWERING AND INSENSITIVE TO PHOTOPERIOD 1</fullName>
    </alternativeName>
    <alternativeName>
        <fullName>SNW domain-containing protein</fullName>
    </alternativeName>
</protein>
<feature type="chain" id="PRO_0000424790" description="SNW/SKI-interacting protein">
    <location>
        <begin position="1"/>
        <end position="613"/>
    </location>
</feature>
<feature type="region of interest" description="SNW">
    <location>
        <begin position="186"/>
        <end position="350"/>
    </location>
</feature>
<feature type="region of interest" description="Disordered" evidence="2">
    <location>
        <begin position="219"/>
        <end position="252"/>
    </location>
</feature>
<feature type="region of interest" description="Disordered" evidence="2">
    <location>
        <begin position="315"/>
        <end position="437"/>
    </location>
</feature>
<feature type="region of interest" description="Disordered" evidence="2">
    <location>
        <begin position="513"/>
        <end position="613"/>
    </location>
</feature>
<feature type="coiled-coil region" evidence="1">
    <location>
        <begin position="135"/>
        <end position="170"/>
    </location>
</feature>
<feature type="coiled-coil region" evidence="1">
    <location>
        <begin position="318"/>
        <end position="349"/>
    </location>
</feature>
<feature type="coiled-coil region" evidence="1">
    <location>
        <begin position="391"/>
        <end position="421"/>
    </location>
</feature>
<feature type="compositionally biased region" description="Pro residues" evidence="2">
    <location>
        <begin position="236"/>
        <end position="247"/>
    </location>
</feature>
<feature type="compositionally biased region" description="Basic and acidic residues" evidence="2">
    <location>
        <begin position="315"/>
        <end position="335"/>
    </location>
</feature>
<feature type="compositionally biased region" description="Basic and acidic residues" evidence="2">
    <location>
        <begin position="358"/>
        <end position="437"/>
    </location>
</feature>
<feature type="compositionally biased region" description="Basic and acidic residues" evidence="2">
    <location>
        <begin position="515"/>
        <end position="529"/>
    </location>
</feature>
<feature type="compositionally biased region" description="Basic and acidic residues" evidence="2">
    <location>
        <begin position="538"/>
        <end position="548"/>
    </location>
</feature>
<feature type="compositionally biased region" description="Basic and acidic residues" evidence="2">
    <location>
        <begin position="562"/>
        <end position="574"/>
    </location>
</feature>
<feature type="compositionally biased region" description="Gly residues" evidence="2">
    <location>
        <begin position="577"/>
        <end position="590"/>
    </location>
</feature>
<feature type="compositionally biased region" description="Basic and acidic residues" evidence="2">
    <location>
        <begin position="592"/>
        <end position="613"/>
    </location>
</feature>
<feature type="modified residue" description="Phosphoserine" evidence="6">
    <location>
        <position position="235"/>
    </location>
</feature>
<feature type="modified residue" description="Phosphoserine" evidence="6">
    <location>
        <position position="243"/>
    </location>
</feature>
<feature type="splice variant" id="VSP_053506" description="In isoform 2." evidence="5">
    <location>
        <begin position="453"/>
        <end position="554"/>
    </location>
</feature>
<feature type="sequence conflict" description="In Ref. 4; BAD44230." evidence="5" ref="4">
    <original>E</original>
    <variation>G</variation>
    <location>
        <position position="395"/>
    </location>
</feature>
<accession>O80653</accession>
<accession>F4I5L6</accession>
<accession>Q67YK1</accession>
<name>SKIP_ARATH</name>
<comment type="function">
    <text evidence="3 4">Splicing factor involved in post-transcriptional regulation of circadian clock and flowering time genes. Associates with the pre-mRNA of PRR7, PRR9, ELF3 and GI, and is necessary for the regulation of their alternative splicing and mRNA maturation. Probably involved in splice site recognition.</text>
</comment>
<comment type="subunit">
    <text evidence="4">Component of the spliceosome. Interacts with SR45.</text>
</comment>
<comment type="subcellular location">
    <subcellularLocation>
        <location evidence="3 4">Nucleus speckle</location>
    </subcellularLocation>
</comment>
<comment type="alternative products">
    <event type="alternative splicing"/>
    <isoform>
        <id>O80653-1</id>
        <name>1</name>
        <sequence type="displayed"/>
    </isoform>
    <isoform>
        <id>O80653-2</id>
        <name>2</name>
        <sequence type="described" ref="VSP_053506"/>
    </isoform>
</comment>
<comment type="tissue specificity">
    <text evidence="3 4">Expressed in roots, stems, seedlings, siliques, cotyledons, leaves, inflorescences, seeds and shoot apical meristem.</text>
</comment>
<comment type="developmental stage">
    <text evidence="3">Expressed in every developmental stage. Up-regulated by senescence.</text>
</comment>
<comment type="induction">
    <text evidence="3 4">Expressed constitutively. Up-regulated by abiotic stress and abscisic acid.</text>
</comment>
<comment type="disruption phenotype">
    <text evidence="4">Longer circadian period. Severely dwarfed and infertile when homozygous.</text>
</comment>
<comment type="similarity">
    <text evidence="5">Belongs to the SNW family.</text>
</comment>
<proteinExistence type="evidence at protein level"/>
<organism>
    <name type="scientific">Arabidopsis thaliana</name>
    <name type="common">Mouse-ear cress</name>
    <dbReference type="NCBI Taxonomy" id="3702"/>
    <lineage>
        <taxon>Eukaryota</taxon>
        <taxon>Viridiplantae</taxon>
        <taxon>Streptophyta</taxon>
        <taxon>Embryophyta</taxon>
        <taxon>Tracheophyta</taxon>
        <taxon>Spermatophyta</taxon>
        <taxon>Magnoliopsida</taxon>
        <taxon>eudicotyledons</taxon>
        <taxon>Gunneridae</taxon>
        <taxon>Pentapetalae</taxon>
        <taxon>rosids</taxon>
        <taxon>malvids</taxon>
        <taxon>Brassicales</taxon>
        <taxon>Brassicaceae</taxon>
        <taxon>Camelineae</taxon>
        <taxon>Arabidopsis</taxon>
    </lineage>
</organism>
<dbReference type="EMBL" id="AC004260">
    <property type="protein sequence ID" value="AAC34351.1"/>
    <property type="molecule type" value="Genomic_DNA"/>
</dbReference>
<dbReference type="EMBL" id="CP002684">
    <property type="protein sequence ID" value="AEE35945.1"/>
    <property type="molecule type" value="Genomic_DNA"/>
</dbReference>
<dbReference type="EMBL" id="CP002684">
    <property type="protein sequence ID" value="AEE35946.1"/>
    <property type="molecule type" value="Genomic_DNA"/>
</dbReference>
<dbReference type="EMBL" id="CP002684">
    <property type="protein sequence ID" value="AEE35947.1"/>
    <property type="molecule type" value="Genomic_DNA"/>
</dbReference>
<dbReference type="EMBL" id="AF386950">
    <property type="protein sequence ID" value="AAK62395.1"/>
    <property type="molecule type" value="mRNA"/>
</dbReference>
<dbReference type="EMBL" id="AY058079">
    <property type="protein sequence ID" value="AAL24187.1"/>
    <property type="molecule type" value="mRNA"/>
</dbReference>
<dbReference type="EMBL" id="AY081520">
    <property type="protein sequence ID" value="AAM10082.1"/>
    <property type="molecule type" value="mRNA"/>
</dbReference>
<dbReference type="EMBL" id="AK175914">
    <property type="protein sequence ID" value="BAD43677.1"/>
    <property type="molecule type" value="mRNA"/>
</dbReference>
<dbReference type="EMBL" id="AK176196">
    <property type="protein sequence ID" value="BAD43959.1"/>
    <property type="molecule type" value="mRNA"/>
</dbReference>
<dbReference type="EMBL" id="AK176338">
    <property type="protein sequence ID" value="BAD44101.1"/>
    <property type="molecule type" value="mRNA"/>
</dbReference>
<dbReference type="EMBL" id="AK176413">
    <property type="protein sequence ID" value="BAD44176.1"/>
    <property type="molecule type" value="mRNA"/>
</dbReference>
<dbReference type="EMBL" id="AK176837">
    <property type="protein sequence ID" value="BAD44600.1"/>
    <property type="molecule type" value="mRNA"/>
</dbReference>
<dbReference type="EMBL" id="AK221263">
    <property type="protein sequence ID" value="BAD93926.1"/>
    <property type="molecule type" value="mRNA"/>
</dbReference>
<dbReference type="EMBL" id="AK176467">
    <property type="protein sequence ID" value="BAD44230.1"/>
    <property type="molecule type" value="mRNA"/>
</dbReference>
<dbReference type="PIR" id="T00448">
    <property type="entry name" value="T00448"/>
</dbReference>
<dbReference type="RefSeq" id="NP_001031291.1">
    <molecule id="O80653-1"/>
    <property type="nucleotide sequence ID" value="NM_001036214.3"/>
</dbReference>
<dbReference type="RefSeq" id="NP_001185416.1">
    <molecule id="O80653-2"/>
    <property type="nucleotide sequence ID" value="NM_001198487.1"/>
</dbReference>
<dbReference type="RefSeq" id="NP_565151.1">
    <molecule id="O80653-1"/>
    <property type="nucleotide sequence ID" value="NM_106368.5"/>
</dbReference>
<dbReference type="SMR" id="O80653"/>
<dbReference type="BioGRID" id="29274">
    <property type="interactions" value="8"/>
</dbReference>
<dbReference type="FunCoup" id="O80653">
    <property type="interactions" value="4703"/>
</dbReference>
<dbReference type="IntAct" id="O80653">
    <property type="interactions" value="3"/>
</dbReference>
<dbReference type="STRING" id="3702.O80653"/>
<dbReference type="iPTMnet" id="O80653"/>
<dbReference type="PaxDb" id="3702-AT1G77180.2"/>
<dbReference type="ProteomicsDB" id="234570">
    <molecule id="O80653-1"/>
</dbReference>
<dbReference type="EnsemblPlants" id="AT1G77180.1">
    <molecule id="O80653-1"/>
    <property type="protein sequence ID" value="AT1G77180.1"/>
    <property type="gene ID" value="AT1G77180"/>
</dbReference>
<dbReference type="EnsemblPlants" id="AT1G77180.2">
    <molecule id="O80653-1"/>
    <property type="protein sequence ID" value="AT1G77180.2"/>
    <property type="gene ID" value="AT1G77180"/>
</dbReference>
<dbReference type="EnsemblPlants" id="AT1G77180.3">
    <molecule id="O80653-2"/>
    <property type="protein sequence ID" value="AT1G77180.3"/>
    <property type="gene ID" value="AT1G77180"/>
</dbReference>
<dbReference type="GeneID" id="844055"/>
<dbReference type="Gramene" id="AT1G77180.1">
    <molecule id="O80653-1"/>
    <property type="protein sequence ID" value="AT1G77180.1"/>
    <property type="gene ID" value="AT1G77180"/>
</dbReference>
<dbReference type="Gramene" id="AT1G77180.2">
    <molecule id="O80653-1"/>
    <property type="protein sequence ID" value="AT1G77180.2"/>
    <property type="gene ID" value="AT1G77180"/>
</dbReference>
<dbReference type="Gramene" id="AT1G77180.3">
    <molecule id="O80653-2"/>
    <property type="protein sequence ID" value="AT1G77180.3"/>
    <property type="gene ID" value="AT1G77180"/>
</dbReference>
<dbReference type="KEGG" id="ath:AT1G77180"/>
<dbReference type="Araport" id="AT1G77180"/>
<dbReference type="TAIR" id="AT1G77180">
    <property type="gene designation" value="SKIP"/>
</dbReference>
<dbReference type="eggNOG" id="KOG2441">
    <property type="taxonomic scope" value="Eukaryota"/>
</dbReference>
<dbReference type="HOGENOM" id="CLU_006601_2_1_1"/>
<dbReference type="InParanoid" id="O80653"/>
<dbReference type="OMA" id="YGQRRGW"/>
<dbReference type="PhylomeDB" id="O80653"/>
<dbReference type="CD-CODE" id="4299E36E">
    <property type="entry name" value="Nucleolus"/>
</dbReference>
<dbReference type="PRO" id="PR:O80653"/>
<dbReference type="Proteomes" id="UP000006548">
    <property type="component" value="Chromosome 1"/>
</dbReference>
<dbReference type="ExpressionAtlas" id="O80653">
    <property type="expression patterns" value="baseline and differential"/>
</dbReference>
<dbReference type="GO" id="GO:0005739">
    <property type="term" value="C:mitochondrion"/>
    <property type="evidence" value="ECO:0007005"/>
    <property type="project" value="TAIR"/>
</dbReference>
<dbReference type="GO" id="GO:0016607">
    <property type="term" value="C:nuclear speck"/>
    <property type="evidence" value="ECO:0007669"/>
    <property type="project" value="UniProtKB-SubCell"/>
</dbReference>
<dbReference type="GO" id="GO:0005730">
    <property type="term" value="C:nucleolus"/>
    <property type="evidence" value="ECO:0007005"/>
    <property type="project" value="TAIR"/>
</dbReference>
<dbReference type="GO" id="GO:0005634">
    <property type="term" value="C:nucleus"/>
    <property type="evidence" value="ECO:0000314"/>
    <property type="project" value="TAIR"/>
</dbReference>
<dbReference type="GO" id="GO:0005681">
    <property type="term" value="C:spliceosomal complex"/>
    <property type="evidence" value="ECO:0007669"/>
    <property type="project" value="UniProtKB-KW"/>
</dbReference>
<dbReference type="GO" id="GO:0036002">
    <property type="term" value="F:pre-mRNA binding"/>
    <property type="evidence" value="ECO:0000353"/>
    <property type="project" value="TAIR"/>
</dbReference>
<dbReference type="GO" id="GO:0000398">
    <property type="term" value="P:mRNA splicing, via spliceosome"/>
    <property type="evidence" value="ECO:0000353"/>
    <property type="project" value="TAIR"/>
</dbReference>
<dbReference type="GO" id="GO:0045893">
    <property type="term" value="P:positive regulation of DNA-templated transcription"/>
    <property type="evidence" value="ECO:0000314"/>
    <property type="project" value="TAIR"/>
</dbReference>
<dbReference type="GO" id="GO:0042752">
    <property type="term" value="P:regulation of circadian rhythm"/>
    <property type="evidence" value="ECO:0000316"/>
    <property type="project" value="TAIR"/>
</dbReference>
<dbReference type="GO" id="GO:2000028">
    <property type="term" value="P:regulation of photoperiodism, flowering"/>
    <property type="evidence" value="ECO:0000315"/>
    <property type="project" value="TAIR"/>
</dbReference>
<dbReference type="GO" id="GO:0009737">
    <property type="term" value="P:response to abscisic acid"/>
    <property type="evidence" value="ECO:0000270"/>
    <property type="project" value="TAIR"/>
</dbReference>
<dbReference type="GO" id="GO:0010555">
    <property type="term" value="P:response to mannitol"/>
    <property type="evidence" value="ECO:0000270"/>
    <property type="project" value="TAIR"/>
</dbReference>
<dbReference type="GO" id="GO:0009651">
    <property type="term" value="P:response to salt stress"/>
    <property type="evidence" value="ECO:0000270"/>
    <property type="project" value="TAIR"/>
</dbReference>
<dbReference type="GO" id="GO:0048511">
    <property type="term" value="P:rhythmic process"/>
    <property type="evidence" value="ECO:0007669"/>
    <property type="project" value="UniProtKB-KW"/>
</dbReference>
<dbReference type="GO" id="GO:0008380">
    <property type="term" value="P:RNA splicing"/>
    <property type="evidence" value="ECO:0000315"/>
    <property type="project" value="TAIR"/>
</dbReference>
<dbReference type="GO" id="GO:0010228">
    <property type="term" value="P:vegetative to reproductive phase transition of meristem"/>
    <property type="evidence" value="ECO:0000315"/>
    <property type="project" value="TAIR"/>
</dbReference>
<dbReference type="InterPro" id="IPR017862">
    <property type="entry name" value="SKI-int_prot_SKIP"/>
</dbReference>
<dbReference type="InterPro" id="IPR004015">
    <property type="entry name" value="SKI-int_prot_SKIP_SNW-dom"/>
</dbReference>
<dbReference type="PANTHER" id="PTHR12096">
    <property type="entry name" value="NUCLEAR PROTEIN SKIP-RELATED"/>
    <property type="match status" value="1"/>
</dbReference>
<dbReference type="Pfam" id="PF02731">
    <property type="entry name" value="SKIP_SNW"/>
    <property type="match status" value="1"/>
</dbReference>
<gene>
    <name type="primary">SKIP</name>
    <name type="synonym">EIP1</name>
    <name type="ordered locus">At1g77180</name>
    <name type="ORF">T14N5.5</name>
</gene>